<feature type="chain" id="PRO_0000264693" description="Acetylglutamate kinase">
    <location>
        <begin position="1"/>
        <end position="306"/>
    </location>
</feature>
<feature type="binding site" evidence="1">
    <location>
        <begin position="68"/>
        <end position="69"/>
    </location>
    <ligand>
        <name>substrate</name>
    </ligand>
</feature>
<feature type="binding site" evidence="1">
    <location>
        <position position="90"/>
    </location>
    <ligand>
        <name>substrate</name>
    </ligand>
</feature>
<feature type="binding site" evidence="1">
    <location>
        <position position="195"/>
    </location>
    <ligand>
        <name>substrate</name>
    </ligand>
</feature>
<feature type="site" description="Transition state stabilizer" evidence="1">
    <location>
        <position position="33"/>
    </location>
</feature>
<feature type="site" description="Transition state stabilizer" evidence="1">
    <location>
        <position position="255"/>
    </location>
</feature>
<sequence length="306" mass="32250">MSENARDPRLVVEILSEALPYIQRFSGKTVVVKYGGNAMTEDTLIDSFARDMVLMKEVGINPVVVHGGGPQIGELLERLNIESRFVGGMRVTDAETMDVVEMVLGGLVNKSIVNLINRSGGKAIGLTGKDGAQITARQLRVEHQTPEMTAPEIIDIGHVGEVEHIATDLIEMLAARDFIPVIAPIGVDAEGHSYNINADLVAGKVAEALGAEKLMLLTNVAGLMNAEGEVMTGLSTAQVDAMIGDGTIHGGMLPKIRCALEAVKGGVASSHIIDGRVPHATLLEIFTNAGVGTLITDTASDVSPED</sequence>
<dbReference type="EC" id="2.7.2.8" evidence="1"/>
<dbReference type="EMBL" id="CP000285">
    <property type="protein sequence ID" value="ABE60329.1"/>
    <property type="molecule type" value="Genomic_DNA"/>
</dbReference>
<dbReference type="RefSeq" id="WP_011508275.1">
    <property type="nucleotide sequence ID" value="NC_007963.1"/>
</dbReference>
<dbReference type="SMR" id="Q1QT79"/>
<dbReference type="STRING" id="290398.Csal_2984"/>
<dbReference type="GeneID" id="95335673"/>
<dbReference type="KEGG" id="csa:Csal_2984"/>
<dbReference type="eggNOG" id="COG0548">
    <property type="taxonomic scope" value="Bacteria"/>
</dbReference>
<dbReference type="HOGENOM" id="CLU_053680_0_0_6"/>
<dbReference type="OrthoDB" id="9803155at2"/>
<dbReference type="UniPathway" id="UPA00068">
    <property type="reaction ID" value="UER00107"/>
</dbReference>
<dbReference type="Proteomes" id="UP000000239">
    <property type="component" value="Chromosome"/>
</dbReference>
<dbReference type="GO" id="GO:0005737">
    <property type="term" value="C:cytoplasm"/>
    <property type="evidence" value="ECO:0007669"/>
    <property type="project" value="UniProtKB-SubCell"/>
</dbReference>
<dbReference type="GO" id="GO:0003991">
    <property type="term" value="F:acetylglutamate kinase activity"/>
    <property type="evidence" value="ECO:0007669"/>
    <property type="project" value="UniProtKB-UniRule"/>
</dbReference>
<dbReference type="GO" id="GO:0005524">
    <property type="term" value="F:ATP binding"/>
    <property type="evidence" value="ECO:0007669"/>
    <property type="project" value="UniProtKB-UniRule"/>
</dbReference>
<dbReference type="GO" id="GO:0042450">
    <property type="term" value="P:arginine biosynthetic process via ornithine"/>
    <property type="evidence" value="ECO:0007669"/>
    <property type="project" value="UniProtKB-UniRule"/>
</dbReference>
<dbReference type="GO" id="GO:0006526">
    <property type="term" value="P:L-arginine biosynthetic process"/>
    <property type="evidence" value="ECO:0007669"/>
    <property type="project" value="UniProtKB-UniPathway"/>
</dbReference>
<dbReference type="CDD" id="cd04250">
    <property type="entry name" value="AAK_NAGK-C"/>
    <property type="match status" value="1"/>
</dbReference>
<dbReference type="FunFam" id="3.40.1160.10:FF:000004">
    <property type="entry name" value="Acetylglutamate kinase"/>
    <property type="match status" value="1"/>
</dbReference>
<dbReference type="Gene3D" id="3.40.1160.10">
    <property type="entry name" value="Acetylglutamate kinase-like"/>
    <property type="match status" value="1"/>
</dbReference>
<dbReference type="HAMAP" id="MF_00082">
    <property type="entry name" value="ArgB"/>
    <property type="match status" value="1"/>
</dbReference>
<dbReference type="InterPro" id="IPR036393">
    <property type="entry name" value="AceGlu_kinase-like_sf"/>
</dbReference>
<dbReference type="InterPro" id="IPR004662">
    <property type="entry name" value="AcgluKinase_fam"/>
</dbReference>
<dbReference type="InterPro" id="IPR037528">
    <property type="entry name" value="ArgB"/>
</dbReference>
<dbReference type="InterPro" id="IPR001048">
    <property type="entry name" value="Asp/Glu/Uridylate_kinase"/>
</dbReference>
<dbReference type="InterPro" id="IPR041727">
    <property type="entry name" value="NAGK-C"/>
</dbReference>
<dbReference type="NCBIfam" id="TIGR00761">
    <property type="entry name" value="argB"/>
    <property type="match status" value="1"/>
</dbReference>
<dbReference type="PANTHER" id="PTHR23342">
    <property type="entry name" value="N-ACETYLGLUTAMATE SYNTHASE"/>
    <property type="match status" value="1"/>
</dbReference>
<dbReference type="PANTHER" id="PTHR23342:SF0">
    <property type="entry name" value="N-ACETYLGLUTAMATE SYNTHASE, MITOCHONDRIAL"/>
    <property type="match status" value="1"/>
</dbReference>
<dbReference type="Pfam" id="PF00696">
    <property type="entry name" value="AA_kinase"/>
    <property type="match status" value="1"/>
</dbReference>
<dbReference type="PIRSF" id="PIRSF000728">
    <property type="entry name" value="NAGK"/>
    <property type="match status" value="1"/>
</dbReference>
<dbReference type="SUPFAM" id="SSF53633">
    <property type="entry name" value="Carbamate kinase-like"/>
    <property type="match status" value="1"/>
</dbReference>
<keyword id="KW-0028">Amino-acid biosynthesis</keyword>
<keyword id="KW-0055">Arginine biosynthesis</keyword>
<keyword id="KW-0067">ATP-binding</keyword>
<keyword id="KW-0963">Cytoplasm</keyword>
<keyword id="KW-0418">Kinase</keyword>
<keyword id="KW-0547">Nucleotide-binding</keyword>
<keyword id="KW-1185">Reference proteome</keyword>
<keyword id="KW-0808">Transferase</keyword>
<name>ARGB_CHRSD</name>
<comment type="function">
    <text evidence="1">Catalyzes the ATP-dependent phosphorylation of N-acetyl-L-glutamate.</text>
</comment>
<comment type="catalytic activity">
    <reaction evidence="1">
        <text>N-acetyl-L-glutamate + ATP = N-acetyl-L-glutamyl 5-phosphate + ADP</text>
        <dbReference type="Rhea" id="RHEA:14629"/>
        <dbReference type="ChEBI" id="CHEBI:30616"/>
        <dbReference type="ChEBI" id="CHEBI:44337"/>
        <dbReference type="ChEBI" id="CHEBI:57936"/>
        <dbReference type="ChEBI" id="CHEBI:456216"/>
        <dbReference type="EC" id="2.7.2.8"/>
    </reaction>
</comment>
<comment type="pathway">
    <text evidence="1">Amino-acid biosynthesis; L-arginine biosynthesis; N(2)-acetyl-L-ornithine from L-glutamate: step 2/4.</text>
</comment>
<comment type="subcellular location">
    <subcellularLocation>
        <location evidence="1">Cytoplasm</location>
    </subcellularLocation>
</comment>
<comment type="similarity">
    <text evidence="1">Belongs to the acetylglutamate kinase family. ArgB subfamily.</text>
</comment>
<gene>
    <name evidence="1" type="primary">argB</name>
    <name type="ordered locus">Csal_2984</name>
</gene>
<protein>
    <recommendedName>
        <fullName evidence="1">Acetylglutamate kinase</fullName>
        <ecNumber evidence="1">2.7.2.8</ecNumber>
    </recommendedName>
    <alternativeName>
        <fullName evidence="1">N-acetyl-L-glutamate 5-phosphotransferase</fullName>
    </alternativeName>
    <alternativeName>
        <fullName evidence="1">NAG kinase</fullName>
        <shortName evidence="1">NAGK</shortName>
    </alternativeName>
</protein>
<accession>Q1QT79</accession>
<organism>
    <name type="scientific">Chromohalobacter salexigens (strain ATCC BAA-138 / DSM 3043 / CIP 106854 / NCIMB 13768 / 1H11)</name>
    <dbReference type="NCBI Taxonomy" id="290398"/>
    <lineage>
        <taxon>Bacteria</taxon>
        <taxon>Pseudomonadati</taxon>
        <taxon>Pseudomonadota</taxon>
        <taxon>Gammaproteobacteria</taxon>
        <taxon>Oceanospirillales</taxon>
        <taxon>Halomonadaceae</taxon>
        <taxon>Chromohalobacter</taxon>
    </lineage>
</organism>
<proteinExistence type="inferred from homology"/>
<reference key="1">
    <citation type="journal article" date="2011" name="Stand. Genomic Sci.">
        <title>Complete genome sequence of the halophilic and highly halotolerant Chromohalobacter salexigens type strain (1H11(T)).</title>
        <authorList>
            <person name="Copeland A."/>
            <person name="O'Connor K."/>
            <person name="Lucas S."/>
            <person name="Lapidus A."/>
            <person name="Berry K.W."/>
            <person name="Detter J.C."/>
            <person name="Del Rio T.G."/>
            <person name="Hammon N."/>
            <person name="Dalin E."/>
            <person name="Tice H."/>
            <person name="Pitluck S."/>
            <person name="Bruce D."/>
            <person name="Goodwin L."/>
            <person name="Han C."/>
            <person name="Tapia R."/>
            <person name="Saunders E."/>
            <person name="Schmutz J."/>
            <person name="Brettin T."/>
            <person name="Larimer F."/>
            <person name="Land M."/>
            <person name="Hauser L."/>
            <person name="Vargas C."/>
            <person name="Nieto J.J."/>
            <person name="Kyrpides N.C."/>
            <person name="Ivanova N."/>
            <person name="Goker M."/>
            <person name="Klenk H.P."/>
            <person name="Csonka L.N."/>
            <person name="Woyke T."/>
        </authorList>
    </citation>
    <scope>NUCLEOTIDE SEQUENCE [LARGE SCALE GENOMIC DNA]</scope>
    <source>
        <strain>ATCC BAA-138 / DSM 3043 / CIP 106854 / NCIMB 13768 / 1H11</strain>
    </source>
</reference>
<evidence type="ECO:0000255" key="1">
    <source>
        <dbReference type="HAMAP-Rule" id="MF_00082"/>
    </source>
</evidence>